<gene>
    <name evidence="1" type="primary">trpD</name>
    <name type="ordered locus">blr4809</name>
</gene>
<evidence type="ECO:0000255" key="1">
    <source>
        <dbReference type="HAMAP-Rule" id="MF_00211"/>
    </source>
</evidence>
<comment type="function">
    <text evidence="1">Catalyzes the transfer of the phosphoribosyl group of 5-phosphorylribose-1-pyrophosphate (PRPP) to anthranilate to yield N-(5'-phosphoribosyl)-anthranilate (PRA).</text>
</comment>
<comment type="catalytic activity">
    <reaction evidence="1">
        <text>N-(5-phospho-beta-D-ribosyl)anthranilate + diphosphate = 5-phospho-alpha-D-ribose 1-diphosphate + anthranilate</text>
        <dbReference type="Rhea" id="RHEA:11768"/>
        <dbReference type="ChEBI" id="CHEBI:16567"/>
        <dbReference type="ChEBI" id="CHEBI:18277"/>
        <dbReference type="ChEBI" id="CHEBI:33019"/>
        <dbReference type="ChEBI" id="CHEBI:58017"/>
        <dbReference type="EC" id="2.4.2.18"/>
    </reaction>
</comment>
<comment type="cofactor">
    <cofactor evidence="1">
        <name>Mg(2+)</name>
        <dbReference type="ChEBI" id="CHEBI:18420"/>
    </cofactor>
    <text evidence="1">Binds 2 magnesium ions per monomer.</text>
</comment>
<comment type="pathway">
    <text evidence="1">Amino-acid biosynthesis; L-tryptophan biosynthesis; L-tryptophan from chorismate: step 2/5.</text>
</comment>
<comment type="subunit">
    <text evidence="1">Homodimer.</text>
</comment>
<comment type="similarity">
    <text evidence="1">Belongs to the anthranilate phosphoribosyltransferase family.</text>
</comment>
<proteinExistence type="inferred from homology"/>
<reference key="1">
    <citation type="journal article" date="1997" name="Biochim. Biophys. Acta">
        <title>The sequence of a symbiotically essential Bradyrhizobium japonicum operon consisting of trpD, trpC and a moaC-like gene.</title>
        <authorList>
            <person name="Kuykendall L.D."/>
            <person name="Hunter W.J."/>
        </authorList>
    </citation>
    <scope>NUCLEOTIDE SEQUENCE [GENOMIC DNA]</scope>
    <source>
        <strain>JCM 10833 / BCRC 13528 / IAM 13628 / NBRC 14792 / USDA 110</strain>
    </source>
</reference>
<reference key="2">
    <citation type="journal article" date="2002" name="DNA Res.">
        <title>Complete genomic sequence of nitrogen-fixing symbiotic bacterium Bradyrhizobium japonicum USDA110.</title>
        <authorList>
            <person name="Kaneko T."/>
            <person name="Nakamura Y."/>
            <person name="Sato S."/>
            <person name="Minamisawa K."/>
            <person name="Uchiumi T."/>
            <person name="Sasamoto S."/>
            <person name="Watanabe A."/>
            <person name="Idesawa K."/>
            <person name="Iriguchi M."/>
            <person name="Kawashima K."/>
            <person name="Kohara M."/>
            <person name="Matsumoto M."/>
            <person name="Shimpo S."/>
            <person name="Tsuruoka H."/>
            <person name="Wada T."/>
            <person name="Yamada M."/>
            <person name="Tabata S."/>
        </authorList>
    </citation>
    <scope>NUCLEOTIDE SEQUENCE [LARGE SCALE GENOMIC DNA]</scope>
    <source>
        <strain>JCM 10833 / BCRC 13528 / IAM 13628 / NBRC 14792 / USDA 110</strain>
    </source>
</reference>
<feature type="chain" id="PRO_0000154431" description="Anthranilate phosphoribosyltransferase">
    <location>
        <begin position="1"/>
        <end position="337"/>
    </location>
</feature>
<feature type="binding site" evidence="1">
    <location>
        <position position="81"/>
    </location>
    <ligand>
        <name>5-phospho-alpha-D-ribose 1-diphosphate</name>
        <dbReference type="ChEBI" id="CHEBI:58017"/>
    </ligand>
</feature>
<feature type="binding site" evidence="1">
    <location>
        <position position="81"/>
    </location>
    <ligand>
        <name>anthranilate</name>
        <dbReference type="ChEBI" id="CHEBI:16567"/>
        <label>1</label>
    </ligand>
</feature>
<feature type="binding site" evidence="1">
    <location>
        <begin position="84"/>
        <end position="85"/>
    </location>
    <ligand>
        <name>5-phospho-alpha-D-ribose 1-diphosphate</name>
        <dbReference type="ChEBI" id="CHEBI:58017"/>
    </ligand>
</feature>
<feature type="binding site" evidence="1">
    <location>
        <position position="89"/>
    </location>
    <ligand>
        <name>5-phospho-alpha-D-ribose 1-diphosphate</name>
        <dbReference type="ChEBI" id="CHEBI:58017"/>
    </ligand>
</feature>
<feature type="binding site" evidence="1">
    <location>
        <begin position="91"/>
        <end position="94"/>
    </location>
    <ligand>
        <name>5-phospho-alpha-D-ribose 1-diphosphate</name>
        <dbReference type="ChEBI" id="CHEBI:58017"/>
    </ligand>
</feature>
<feature type="binding site" evidence="1">
    <location>
        <position position="93"/>
    </location>
    <ligand>
        <name>Mg(2+)</name>
        <dbReference type="ChEBI" id="CHEBI:18420"/>
        <label>1</label>
    </ligand>
</feature>
<feature type="binding site" evidence="1">
    <location>
        <begin position="109"/>
        <end position="117"/>
    </location>
    <ligand>
        <name>5-phospho-alpha-D-ribose 1-diphosphate</name>
        <dbReference type="ChEBI" id="CHEBI:58017"/>
    </ligand>
</feature>
<feature type="binding site" evidence="1">
    <location>
        <position position="112"/>
    </location>
    <ligand>
        <name>anthranilate</name>
        <dbReference type="ChEBI" id="CHEBI:16567"/>
        <label>1</label>
    </ligand>
</feature>
<feature type="binding site" evidence="1">
    <location>
        <position position="121"/>
    </location>
    <ligand>
        <name>5-phospho-alpha-D-ribose 1-diphosphate</name>
        <dbReference type="ChEBI" id="CHEBI:58017"/>
    </ligand>
</feature>
<feature type="binding site" evidence="1">
    <location>
        <position position="167"/>
    </location>
    <ligand>
        <name>anthranilate</name>
        <dbReference type="ChEBI" id="CHEBI:16567"/>
        <label>2</label>
    </ligand>
</feature>
<feature type="binding site" evidence="1">
    <location>
        <position position="226"/>
    </location>
    <ligand>
        <name>Mg(2+)</name>
        <dbReference type="ChEBI" id="CHEBI:18420"/>
        <label>2</label>
    </ligand>
</feature>
<feature type="binding site" evidence="1">
    <location>
        <position position="227"/>
    </location>
    <ligand>
        <name>Mg(2+)</name>
        <dbReference type="ChEBI" id="CHEBI:18420"/>
        <label>1</label>
    </ligand>
</feature>
<feature type="binding site" evidence="1">
    <location>
        <position position="227"/>
    </location>
    <ligand>
        <name>Mg(2+)</name>
        <dbReference type="ChEBI" id="CHEBI:18420"/>
        <label>2</label>
    </ligand>
</feature>
<accession>P94326</accession>
<organism>
    <name type="scientific">Bradyrhizobium diazoefficiens (strain JCM 10833 / BCRC 13528 / IAM 13628 / NBRC 14792 / USDA 110)</name>
    <dbReference type="NCBI Taxonomy" id="224911"/>
    <lineage>
        <taxon>Bacteria</taxon>
        <taxon>Pseudomonadati</taxon>
        <taxon>Pseudomonadota</taxon>
        <taxon>Alphaproteobacteria</taxon>
        <taxon>Hyphomicrobiales</taxon>
        <taxon>Nitrobacteraceae</taxon>
        <taxon>Bradyrhizobium</taxon>
    </lineage>
</organism>
<sequence>MDDLKSIIGKVATGASLSRDEAASAFDAMMSGEATPSQMGGLLMALRVRGETVDEITGAVAAMRSKMLTVTAPPDAVDIVGTGGDGSGSVNVSTCASFIVSGAGVPVAKHGNRALSSRSGAADVLASLGVRIDLRPEQVGRCVRECGIGFMFAPAHHPAMKNVGPTRVELATRTIFNLLGPLSNPAGVKRQMVGVFSRQWVQPLAQVLKNLGSESAWVVHGSDGLDEITLTGPTFVSSLHNGEIRNFEVTPEEAGLPRCEPGALKGGDADANAIALQSVLNGKPSAYRDVALMNAAAALVVAGRAKDLKEGVALGAKSLDSGAANARLKHLIAVSNG</sequence>
<protein>
    <recommendedName>
        <fullName evidence="1">Anthranilate phosphoribosyltransferase</fullName>
        <ecNumber evidence="1">2.4.2.18</ecNumber>
    </recommendedName>
</protein>
<keyword id="KW-0028">Amino-acid biosynthesis</keyword>
<keyword id="KW-0057">Aromatic amino acid biosynthesis</keyword>
<keyword id="KW-0328">Glycosyltransferase</keyword>
<keyword id="KW-0460">Magnesium</keyword>
<keyword id="KW-0479">Metal-binding</keyword>
<keyword id="KW-1185">Reference proteome</keyword>
<keyword id="KW-0808">Transferase</keyword>
<keyword id="KW-0822">Tryptophan biosynthesis</keyword>
<name>TRPD_BRADU</name>
<dbReference type="EC" id="2.4.2.18" evidence="1"/>
<dbReference type="EMBL" id="U79771">
    <property type="protein sequence ID" value="AAB39009.1"/>
    <property type="molecule type" value="Genomic_DNA"/>
</dbReference>
<dbReference type="EMBL" id="BA000040">
    <property type="protein sequence ID" value="BAC50074.1"/>
    <property type="molecule type" value="Genomic_DNA"/>
</dbReference>
<dbReference type="PIR" id="T46958">
    <property type="entry name" value="T46958"/>
</dbReference>
<dbReference type="RefSeq" id="NP_771449.1">
    <property type="nucleotide sequence ID" value="NC_004463.1"/>
</dbReference>
<dbReference type="RefSeq" id="WP_011087577.1">
    <property type="nucleotide sequence ID" value="NC_004463.1"/>
</dbReference>
<dbReference type="SMR" id="P94326"/>
<dbReference type="FunCoup" id="P94326">
    <property type="interactions" value="542"/>
</dbReference>
<dbReference type="STRING" id="224911.AAV28_21340"/>
<dbReference type="EnsemblBacteria" id="BAC50074">
    <property type="protein sequence ID" value="BAC50074"/>
    <property type="gene ID" value="BAC50074"/>
</dbReference>
<dbReference type="GeneID" id="46491814"/>
<dbReference type="KEGG" id="bja:blr4809"/>
<dbReference type="PATRIC" id="fig|224911.44.peg.4648"/>
<dbReference type="eggNOG" id="COG0547">
    <property type="taxonomic scope" value="Bacteria"/>
</dbReference>
<dbReference type="HOGENOM" id="CLU_034315_2_1_5"/>
<dbReference type="InParanoid" id="P94326"/>
<dbReference type="OrthoDB" id="9806430at2"/>
<dbReference type="PhylomeDB" id="P94326"/>
<dbReference type="UniPathway" id="UPA00035">
    <property type="reaction ID" value="UER00041"/>
</dbReference>
<dbReference type="Proteomes" id="UP000002526">
    <property type="component" value="Chromosome"/>
</dbReference>
<dbReference type="GO" id="GO:0005829">
    <property type="term" value="C:cytosol"/>
    <property type="evidence" value="ECO:0000318"/>
    <property type="project" value="GO_Central"/>
</dbReference>
<dbReference type="GO" id="GO:0004048">
    <property type="term" value="F:anthranilate phosphoribosyltransferase activity"/>
    <property type="evidence" value="ECO:0007669"/>
    <property type="project" value="UniProtKB-UniRule"/>
</dbReference>
<dbReference type="GO" id="GO:0000287">
    <property type="term" value="F:magnesium ion binding"/>
    <property type="evidence" value="ECO:0007669"/>
    <property type="project" value="UniProtKB-UniRule"/>
</dbReference>
<dbReference type="GO" id="GO:0000162">
    <property type="term" value="P:L-tryptophan biosynthetic process"/>
    <property type="evidence" value="ECO:0000318"/>
    <property type="project" value="GO_Central"/>
</dbReference>
<dbReference type="FunFam" id="1.20.970.10:FF:000015">
    <property type="entry name" value="Anthranilate phosphoribosyltransferase"/>
    <property type="match status" value="1"/>
</dbReference>
<dbReference type="FunFam" id="3.40.1030.10:FF:000002">
    <property type="entry name" value="Anthranilate phosphoribosyltransferase"/>
    <property type="match status" value="1"/>
</dbReference>
<dbReference type="Gene3D" id="3.40.1030.10">
    <property type="entry name" value="Nucleoside phosphorylase/phosphoribosyltransferase catalytic domain"/>
    <property type="match status" value="1"/>
</dbReference>
<dbReference type="Gene3D" id="1.20.970.10">
    <property type="entry name" value="Transferase, Pyrimidine Nucleoside Phosphorylase, Chain C"/>
    <property type="match status" value="1"/>
</dbReference>
<dbReference type="HAMAP" id="MF_00211">
    <property type="entry name" value="TrpD"/>
    <property type="match status" value="1"/>
</dbReference>
<dbReference type="InterPro" id="IPR005940">
    <property type="entry name" value="Anthranilate_Pribosyl_Tfrase"/>
</dbReference>
<dbReference type="InterPro" id="IPR000312">
    <property type="entry name" value="Glycosyl_Trfase_fam3"/>
</dbReference>
<dbReference type="InterPro" id="IPR017459">
    <property type="entry name" value="Glycosyl_Trfase_fam3_N_dom"/>
</dbReference>
<dbReference type="InterPro" id="IPR036320">
    <property type="entry name" value="Glycosyl_Trfase_fam3_N_dom_sf"/>
</dbReference>
<dbReference type="InterPro" id="IPR035902">
    <property type="entry name" value="Nuc_phospho_transferase"/>
</dbReference>
<dbReference type="NCBIfam" id="TIGR01245">
    <property type="entry name" value="trpD"/>
    <property type="match status" value="1"/>
</dbReference>
<dbReference type="PANTHER" id="PTHR43285">
    <property type="entry name" value="ANTHRANILATE PHOSPHORIBOSYLTRANSFERASE"/>
    <property type="match status" value="1"/>
</dbReference>
<dbReference type="PANTHER" id="PTHR43285:SF2">
    <property type="entry name" value="ANTHRANILATE PHOSPHORIBOSYLTRANSFERASE"/>
    <property type="match status" value="1"/>
</dbReference>
<dbReference type="Pfam" id="PF02885">
    <property type="entry name" value="Glycos_trans_3N"/>
    <property type="match status" value="1"/>
</dbReference>
<dbReference type="Pfam" id="PF00591">
    <property type="entry name" value="Glycos_transf_3"/>
    <property type="match status" value="1"/>
</dbReference>
<dbReference type="SUPFAM" id="SSF52418">
    <property type="entry name" value="Nucleoside phosphorylase/phosphoribosyltransferase catalytic domain"/>
    <property type="match status" value="1"/>
</dbReference>
<dbReference type="SUPFAM" id="SSF47648">
    <property type="entry name" value="Nucleoside phosphorylase/phosphoribosyltransferase N-terminal domain"/>
    <property type="match status" value="1"/>
</dbReference>